<accession>Q0HZU8</accession>
<reference key="1">
    <citation type="submission" date="2006-08" db="EMBL/GenBank/DDBJ databases">
        <title>Complete sequence of chromosome 1 of Shewanella sp. MR-7.</title>
        <authorList>
            <person name="Copeland A."/>
            <person name="Lucas S."/>
            <person name="Lapidus A."/>
            <person name="Barry K."/>
            <person name="Detter J.C."/>
            <person name="Glavina del Rio T."/>
            <person name="Hammon N."/>
            <person name="Israni S."/>
            <person name="Dalin E."/>
            <person name="Tice H."/>
            <person name="Pitluck S."/>
            <person name="Kiss H."/>
            <person name="Brettin T."/>
            <person name="Bruce D."/>
            <person name="Han C."/>
            <person name="Tapia R."/>
            <person name="Gilna P."/>
            <person name="Schmutz J."/>
            <person name="Larimer F."/>
            <person name="Land M."/>
            <person name="Hauser L."/>
            <person name="Kyrpides N."/>
            <person name="Mikhailova N."/>
            <person name="Nealson K."/>
            <person name="Konstantinidis K."/>
            <person name="Klappenbach J."/>
            <person name="Tiedje J."/>
            <person name="Richardson P."/>
        </authorList>
    </citation>
    <scope>NUCLEOTIDE SEQUENCE [LARGE SCALE GENOMIC DNA]</scope>
    <source>
        <strain>MR-7</strain>
    </source>
</reference>
<gene>
    <name evidence="2" type="primary">folE</name>
    <name type="ordered locus">Shewmr7_0354</name>
</gene>
<organism>
    <name type="scientific">Shewanella sp. (strain MR-7)</name>
    <dbReference type="NCBI Taxonomy" id="60481"/>
    <lineage>
        <taxon>Bacteria</taxon>
        <taxon>Pseudomonadati</taxon>
        <taxon>Pseudomonadota</taxon>
        <taxon>Gammaproteobacteria</taxon>
        <taxon>Alteromonadales</taxon>
        <taxon>Shewanellaceae</taxon>
        <taxon>Shewanella</taxon>
    </lineage>
</organism>
<keyword id="KW-0342">GTP-binding</keyword>
<keyword id="KW-0378">Hydrolase</keyword>
<keyword id="KW-0479">Metal-binding</keyword>
<keyword id="KW-0547">Nucleotide-binding</keyword>
<keyword id="KW-0554">One-carbon metabolism</keyword>
<keyword id="KW-0862">Zinc</keyword>
<name>GCH1_SHESR</name>
<comment type="catalytic activity">
    <reaction evidence="2">
        <text>GTP + H2O = 7,8-dihydroneopterin 3'-triphosphate + formate + H(+)</text>
        <dbReference type="Rhea" id="RHEA:17473"/>
        <dbReference type="ChEBI" id="CHEBI:15377"/>
        <dbReference type="ChEBI" id="CHEBI:15378"/>
        <dbReference type="ChEBI" id="CHEBI:15740"/>
        <dbReference type="ChEBI" id="CHEBI:37565"/>
        <dbReference type="ChEBI" id="CHEBI:58462"/>
        <dbReference type="EC" id="3.5.4.16"/>
    </reaction>
</comment>
<comment type="pathway">
    <text evidence="2">Cofactor biosynthesis; 7,8-dihydroneopterin triphosphate biosynthesis; 7,8-dihydroneopterin triphosphate from GTP: step 1/1.</text>
</comment>
<comment type="subunit">
    <text evidence="1">Toroid-shaped homodecamer, composed of two pentamers of five dimers.</text>
</comment>
<comment type="similarity">
    <text evidence="2">Belongs to the GTP cyclohydrolase I family.</text>
</comment>
<proteinExistence type="inferred from homology"/>
<protein>
    <recommendedName>
        <fullName evidence="2">GTP cyclohydrolase 1</fullName>
        <ecNumber evidence="2">3.5.4.16</ecNumber>
    </recommendedName>
    <alternativeName>
        <fullName evidence="2">GTP cyclohydrolase I</fullName>
        <shortName evidence="2">GTP-CH-I</shortName>
    </alternativeName>
</protein>
<sequence length="216" mass="24294">MALSEAAVKVQAALHERGLETPMLPNVFTPEERKDKIEFHMKEILTLMSLDLSDDSLADTPRRIAKMYVDEIFSGLDYENFPKITVIDNKMGFDEMVRVQDISLTSTCEHHLVTIDGTATIAYIPRKKIIGLSKINRIVRFFSQRPQVQERLTQQVLVALQTLLETKDVAVKMDAVHYCVKSRGVMDSTSSTTTTALGGIFKSNPATRAEFLNQSK</sequence>
<dbReference type="EC" id="3.5.4.16" evidence="2"/>
<dbReference type="EMBL" id="CP000444">
    <property type="protein sequence ID" value="ABI41357.1"/>
    <property type="molecule type" value="Genomic_DNA"/>
</dbReference>
<dbReference type="SMR" id="Q0HZU8"/>
<dbReference type="KEGG" id="shm:Shewmr7_0354"/>
<dbReference type="HOGENOM" id="CLU_049768_3_2_6"/>
<dbReference type="UniPathway" id="UPA00848">
    <property type="reaction ID" value="UER00151"/>
</dbReference>
<dbReference type="GO" id="GO:0005737">
    <property type="term" value="C:cytoplasm"/>
    <property type="evidence" value="ECO:0007669"/>
    <property type="project" value="TreeGrafter"/>
</dbReference>
<dbReference type="GO" id="GO:0005525">
    <property type="term" value="F:GTP binding"/>
    <property type="evidence" value="ECO:0007669"/>
    <property type="project" value="UniProtKB-KW"/>
</dbReference>
<dbReference type="GO" id="GO:0003934">
    <property type="term" value="F:GTP cyclohydrolase I activity"/>
    <property type="evidence" value="ECO:0007669"/>
    <property type="project" value="UniProtKB-UniRule"/>
</dbReference>
<dbReference type="GO" id="GO:0008270">
    <property type="term" value="F:zinc ion binding"/>
    <property type="evidence" value="ECO:0007669"/>
    <property type="project" value="UniProtKB-UniRule"/>
</dbReference>
<dbReference type="GO" id="GO:0006730">
    <property type="term" value="P:one-carbon metabolic process"/>
    <property type="evidence" value="ECO:0007669"/>
    <property type="project" value="UniProtKB-UniRule"/>
</dbReference>
<dbReference type="GO" id="GO:0006729">
    <property type="term" value="P:tetrahydrobiopterin biosynthetic process"/>
    <property type="evidence" value="ECO:0007669"/>
    <property type="project" value="TreeGrafter"/>
</dbReference>
<dbReference type="GO" id="GO:0046654">
    <property type="term" value="P:tetrahydrofolate biosynthetic process"/>
    <property type="evidence" value="ECO:0007669"/>
    <property type="project" value="UniProtKB-UniRule"/>
</dbReference>
<dbReference type="FunFam" id="3.30.1130.10:FF:000001">
    <property type="entry name" value="GTP cyclohydrolase 1"/>
    <property type="match status" value="1"/>
</dbReference>
<dbReference type="Gene3D" id="1.10.286.10">
    <property type="match status" value="1"/>
</dbReference>
<dbReference type="Gene3D" id="3.30.1130.10">
    <property type="match status" value="1"/>
</dbReference>
<dbReference type="HAMAP" id="MF_00223">
    <property type="entry name" value="FolE"/>
    <property type="match status" value="1"/>
</dbReference>
<dbReference type="InterPro" id="IPR043133">
    <property type="entry name" value="GTP-CH-I_C/QueF"/>
</dbReference>
<dbReference type="InterPro" id="IPR043134">
    <property type="entry name" value="GTP-CH-I_N"/>
</dbReference>
<dbReference type="InterPro" id="IPR001474">
    <property type="entry name" value="GTP_CycHdrlase_I"/>
</dbReference>
<dbReference type="InterPro" id="IPR018234">
    <property type="entry name" value="GTP_CycHdrlase_I_CS"/>
</dbReference>
<dbReference type="InterPro" id="IPR020602">
    <property type="entry name" value="GTP_CycHdrlase_I_dom"/>
</dbReference>
<dbReference type="NCBIfam" id="TIGR00063">
    <property type="entry name" value="folE"/>
    <property type="match status" value="1"/>
</dbReference>
<dbReference type="NCBIfam" id="NF006824">
    <property type="entry name" value="PRK09347.1-1"/>
    <property type="match status" value="1"/>
</dbReference>
<dbReference type="NCBIfam" id="NF006826">
    <property type="entry name" value="PRK09347.1-3"/>
    <property type="match status" value="1"/>
</dbReference>
<dbReference type="PANTHER" id="PTHR11109:SF7">
    <property type="entry name" value="GTP CYCLOHYDROLASE 1"/>
    <property type="match status" value="1"/>
</dbReference>
<dbReference type="PANTHER" id="PTHR11109">
    <property type="entry name" value="GTP CYCLOHYDROLASE I"/>
    <property type="match status" value="1"/>
</dbReference>
<dbReference type="Pfam" id="PF01227">
    <property type="entry name" value="GTP_cyclohydroI"/>
    <property type="match status" value="1"/>
</dbReference>
<dbReference type="SUPFAM" id="SSF55620">
    <property type="entry name" value="Tetrahydrobiopterin biosynthesis enzymes-like"/>
    <property type="match status" value="1"/>
</dbReference>
<dbReference type="PROSITE" id="PS00859">
    <property type="entry name" value="GTP_CYCLOHYDROL_1_1"/>
    <property type="match status" value="1"/>
</dbReference>
<dbReference type="PROSITE" id="PS00860">
    <property type="entry name" value="GTP_CYCLOHYDROL_1_2"/>
    <property type="match status" value="1"/>
</dbReference>
<feature type="chain" id="PRO_1000043736" description="GTP cyclohydrolase 1">
    <location>
        <begin position="1"/>
        <end position="216"/>
    </location>
</feature>
<feature type="binding site" evidence="2">
    <location>
        <position position="108"/>
    </location>
    <ligand>
        <name>Zn(2+)</name>
        <dbReference type="ChEBI" id="CHEBI:29105"/>
    </ligand>
</feature>
<feature type="binding site" evidence="2">
    <location>
        <position position="111"/>
    </location>
    <ligand>
        <name>Zn(2+)</name>
        <dbReference type="ChEBI" id="CHEBI:29105"/>
    </ligand>
</feature>
<feature type="binding site" evidence="2">
    <location>
        <position position="179"/>
    </location>
    <ligand>
        <name>Zn(2+)</name>
        <dbReference type="ChEBI" id="CHEBI:29105"/>
    </ligand>
</feature>
<evidence type="ECO:0000250" key="1"/>
<evidence type="ECO:0000255" key="2">
    <source>
        <dbReference type="HAMAP-Rule" id="MF_00223"/>
    </source>
</evidence>